<comment type="function">
    <text evidence="4">Catalyzes the trans-addition of the 2 molecules of isopentenyl diphosphate (IPP) onto geranyl diphosphate (GDP) to form geranylgeranyl pyrophosphate (GGDP). Does not catalyze the conversion of dimethylallyl diphosphate (DMAPP).</text>
</comment>
<comment type="catalytic activity">
    <reaction evidence="4">
        <text>isopentenyl diphosphate + (2E)-geranyl diphosphate = (2E,6E)-farnesyl diphosphate + diphosphate</text>
        <dbReference type="Rhea" id="RHEA:19361"/>
        <dbReference type="ChEBI" id="CHEBI:33019"/>
        <dbReference type="ChEBI" id="CHEBI:58057"/>
        <dbReference type="ChEBI" id="CHEBI:128769"/>
        <dbReference type="ChEBI" id="CHEBI:175763"/>
        <dbReference type="EC" id="2.5.1.10"/>
    </reaction>
</comment>
<comment type="catalytic activity">
    <reaction evidence="4">
        <text>isopentenyl diphosphate + (2E,6E)-farnesyl diphosphate = (2E,6E,10E)-geranylgeranyl diphosphate + diphosphate</text>
        <dbReference type="Rhea" id="RHEA:17653"/>
        <dbReference type="ChEBI" id="CHEBI:33019"/>
        <dbReference type="ChEBI" id="CHEBI:58756"/>
        <dbReference type="ChEBI" id="CHEBI:128769"/>
        <dbReference type="ChEBI" id="CHEBI:175763"/>
        <dbReference type="EC" id="2.5.1.29"/>
    </reaction>
</comment>
<comment type="cofactor">
    <cofactor evidence="1">
        <name>Mg(2+)</name>
        <dbReference type="ChEBI" id="CHEBI:18420"/>
    </cofactor>
    <text evidence="1">Binds 2 Mg(2+) ions per subunit.</text>
</comment>
<comment type="pathway">
    <text>Isoprenoid biosynthesis; farnesyl diphosphate biosynthesis; farnesyl diphosphate from geranyl diphosphate and isopentenyl diphosphate: step 1/1.</text>
</comment>
<comment type="pathway">
    <text>Isoprenoid biosynthesis; geranylgeranyl diphosphate biosynthesis; geranylgeranyl diphosphate from farnesyl diphosphate and isopentenyl diphosphate: step 1/1.</text>
</comment>
<comment type="subcellular location">
    <subcellularLocation>
        <location>Cytoplasm</location>
    </subcellularLocation>
</comment>
<comment type="similarity">
    <text evidence="5">Belongs to the FPP/GGPP synthase family.</text>
</comment>
<accession>B2DBE8</accession>
<evidence type="ECO:0000250" key="1"/>
<evidence type="ECO:0000250" key="2">
    <source>
        <dbReference type="UniProtKB" id="P14324"/>
    </source>
</evidence>
<evidence type="ECO:0000250" key="3">
    <source>
        <dbReference type="UniProtKB" id="Q12051"/>
    </source>
</evidence>
<evidence type="ECO:0000269" key="4">
    <source>
    </source>
</evidence>
<evidence type="ECO:0000305" key="5"/>
<sequence>MTSGSKAHPVPATCTMESPPLHLDMGAARSSVCTELTIMPRPLAKSLQDSIDSNFPIDEGFQSGGEDEDMRRLFCNILPEVSTAAVDAPFHYTSSLPSKGVRDKLIGGLNIWVGASPKALDSVTSVVVDVHNLSLMQDDVEDNSPLRRSRPSTHSIFGIDQTVNSSTCGIVEVLRRSSEMQNPAFLKIVIEELRSLLIGQSLDLLWTHQISTPSVEEYLQMVDGKTGGLFRMASKLMIAQSESSNMNPTDLDALMTLLGRYFQIRDDYMNLTSQEYTKSKGFCEDLDEGKYSLIMIHALENCDHKSRVLLDSMLLERRATGAAGLGHKELILSMMQQTGSLQYAVEILSVLFNEIFELVELIDRRTGKVNKPIRDLLAALEIKKDSPRK</sequence>
<reference key="1">
    <citation type="journal article" date="2008" name="Biosci. Biotechnol. Biochem.">
        <title>Identification of diterpene biosynthetic gene clusters and functional analysis of labdane-related diterpene cyclases in Phomopsis amygdali.</title>
        <authorList>
            <person name="Toyomasu T."/>
            <person name="Niida R."/>
            <person name="Kenmoku H."/>
            <person name="Kanno Y."/>
            <person name="Miura S."/>
            <person name="Nakano C."/>
            <person name="Shiono Y."/>
            <person name="Mitsuhashi W."/>
            <person name="Toshima H."/>
            <person name="Oikawa H."/>
            <person name="Hoshino T."/>
            <person name="Dairi T."/>
            <person name="Kato N."/>
            <person name="Sassa T."/>
        </authorList>
    </citation>
    <scope>NUCLEOTIDE SEQUENCE [MRNA]</scope>
    <scope>FUNCTION</scope>
    <scope>CATALYTIC ACTIVITY</scope>
    <source>
        <strain>N2</strain>
    </source>
</reference>
<keyword id="KW-0963">Cytoplasm</keyword>
<keyword id="KW-0414">Isoprene biosynthesis</keyword>
<keyword id="KW-0460">Magnesium</keyword>
<keyword id="KW-0479">Metal-binding</keyword>
<keyword id="KW-0808">Transferase</keyword>
<protein>
    <recommendedName>
        <fullName>Geranylgeranyl pyrophosphate synthase A</fullName>
        <shortName>GGPP synthase A</shortName>
        <shortName>GGPPSase A</shortName>
    </recommendedName>
    <alternativeName>
        <fullName>(2E,6E)-farnesyl diphosphate synthase A</fullName>
    </alternativeName>
    <alternativeName>
        <fullName>Farnesyl diphosphate synthase A</fullName>
    </alternativeName>
    <alternativeName>
        <fullName>Farnesyltranstransferase A</fullName>
        <ecNumber>2.5.1.29</ecNumber>
    </alternativeName>
    <alternativeName>
        <fullName>Geranylgeranyl diphosphate synthase A</fullName>
    </alternativeName>
    <alternativeName>
        <fullName>Geranyltranstransferase A</fullName>
        <ecNumber>2.5.1.10</ecNumber>
    </alternativeName>
</protein>
<proteinExistence type="evidence at protein level"/>
<organism>
    <name type="scientific">Phomopsis amygdali</name>
    <name type="common">Fusicoccum amygdali</name>
    <dbReference type="NCBI Taxonomy" id="1214568"/>
    <lineage>
        <taxon>Eukaryota</taxon>
        <taxon>Fungi</taxon>
        <taxon>Dikarya</taxon>
        <taxon>Ascomycota</taxon>
        <taxon>Pezizomycotina</taxon>
        <taxon>Sordariomycetes</taxon>
        <taxon>Sordariomycetidae</taxon>
        <taxon>Diaporthales</taxon>
        <taxon>Diaporthaceae</taxon>
        <taxon>Diaporthe</taxon>
    </lineage>
</organism>
<gene>
    <name type="primary">GGS-A</name>
</gene>
<dbReference type="EC" id="2.5.1.29"/>
<dbReference type="EC" id="2.5.1.10"/>
<dbReference type="EMBL" id="AB252830">
    <property type="protein sequence ID" value="BAG30959.1"/>
    <property type="molecule type" value="mRNA"/>
</dbReference>
<dbReference type="SMR" id="B2DBE8"/>
<dbReference type="UniPathway" id="UPA00260">
    <property type="reaction ID" value="UER00369"/>
</dbReference>
<dbReference type="UniPathway" id="UPA00389">
    <property type="reaction ID" value="UER00564"/>
</dbReference>
<dbReference type="GO" id="GO:0005737">
    <property type="term" value="C:cytoplasm"/>
    <property type="evidence" value="ECO:0007669"/>
    <property type="project" value="UniProtKB-SubCell"/>
</dbReference>
<dbReference type="GO" id="GO:0004337">
    <property type="term" value="F:(2E,6E)-farnesyl diphosphate synthase activity"/>
    <property type="evidence" value="ECO:0007669"/>
    <property type="project" value="UniProtKB-EC"/>
</dbReference>
<dbReference type="GO" id="GO:0004311">
    <property type="term" value="F:geranylgeranyl diphosphate synthase activity"/>
    <property type="evidence" value="ECO:0007669"/>
    <property type="project" value="UniProtKB-EC"/>
</dbReference>
<dbReference type="GO" id="GO:0046872">
    <property type="term" value="F:metal ion binding"/>
    <property type="evidence" value="ECO:0007669"/>
    <property type="project" value="UniProtKB-KW"/>
</dbReference>
<dbReference type="GO" id="GO:0046165">
    <property type="term" value="P:alcohol biosynthetic process"/>
    <property type="evidence" value="ECO:0007669"/>
    <property type="project" value="UniProtKB-ARBA"/>
</dbReference>
<dbReference type="GO" id="GO:0045337">
    <property type="term" value="P:farnesyl diphosphate biosynthetic process"/>
    <property type="evidence" value="ECO:0007669"/>
    <property type="project" value="UniProtKB-UniPathway"/>
</dbReference>
<dbReference type="GO" id="GO:0033386">
    <property type="term" value="P:geranylgeranyl diphosphate biosynthetic process"/>
    <property type="evidence" value="ECO:0007669"/>
    <property type="project" value="UniProtKB-UniPathway"/>
</dbReference>
<dbReference type="GO" id="GO:0043386">
    <property type="term" value="P:mycotoxin biosynthetic process"/>
    <property type="evidence" value="ECO:0007669"/>
    <property type="project" value="UniProtKB-ARBA"/>
</dbReference>
<dbReference type="Gene3D" id="1.10.600.10">
    <property type="entry name" value="Farnesyl Diphosphate Synthase"/>
    <property type="match status" value="1"/>
</dbReference>
<dbReference type="InterPro" id="IPR008949">
    <property type="entry name" value="Isoprenoid_synthase_dom_sf"/>
</dbReference>
<dbReference type="InterPro" id="IPR000092">
    <property type="entry name" value="Polyprenyl_synt"/>
</dbReference>
<dbReference type="InterPro" id="IPR033749">
    <property type="entry name" value="Polyprenyl_synt_CS"/>
</dbReference>
<dbReference type="PANTHER" id="PTHR12001">
    <property type="entry name" value="GERANYLGERANYL PYROPHOSPHATE SYNTHASE"/>
    <property type="match status" value="1"/>
</dbReference>
<dbReference type="PANTHER" id="PTHR12001:SF72">
    <property type="entry name" value="THIJ_PFPI FAMILY PROTEIN (AFU_ORTHOLOGUE AFUA_3G01210)-RELATED"/>
    <property type="match status" value="1"/>
</dbReference>
<dbReference type="Pfam" id="PF00348">
    <property type="entry name" value="polyprenyl_synt"/>
    <property type="match status" value="1"/>
</dbReference>
<dbReference type="SFLD" id="SFLDS00005">
    <property type="entry name" value="Isoprenoid_Synthase_Type_I"/>
    <property type="match status" value="1"/>
</dbReference>
<dbReference type="SUPFAM" id="SSF48576">
    <property type="entry name" value="Terpenoid synthases"/>
    <property type="match status" value="1"/>
</dbReference>
<dbReference type="PROSITE" id="PS00444">
    <property type="entry name" value="POLYPRENYL_SYNTHASE_2"/>
    <property type="match status" value="1"/>
</dbReference>
<name>GGS1_PHOAM</name>
<feature type="chain" id="PRO_0000415668" description="Geranylgeranyl pyrophosphate synthase A">
    <location>
        <begin position="1"/>
        <end position="389"/>
    </location>
</feature>
<feature type="binding site" evidence="2">
    <location>
        <position position="99"/>
    </location>
    <ligand>
        <name>isopentenyl diphosphate</name>
        <dbReference type="ChEBI" id="CHEBI:128769"/>
    </ligand>
</feature>
<feature type="binding site" evidence="2">
    <location>
        <position position="102"/>
    </location>
    <ligand>
        <name>isopentenyl diphosphate</name>
        <dbReference type="ChEBI" id="CHEBI:128769"/>
    </ligand>
</feature>
<feature type="binding site" evidence="3">
    <location>
        <position position="131"/>
    </location>
    <ligand>
        <name>isopentenyl diphosphate</name>
        <dbReference type="ChEBI" id="CHEBI:128769"/>
    </ligand>
</feature>
<feature type="binding site" evidence="2">
    <location>
        <position position="138"/>
    </location>
    <ligand>
        <name>Mg(2+)</name>
        <dbReference type="ChEBI" id="CHEBI:18420"/>
        <label>1</label>
    </ligand>
</feature>
<feature type="binding site" evidence="2">
    <location>
        <position position="138"/>
    </location>
    <ligand>
        <name>Mg(2+)</name>
        <dbReference type="ChEBI" id="CHEBI:18420"/>
        <label>2</label>
    </ligand>
</feature>
<feature type="binding site" evidence="2">
    <location>
        <position position="142"/>
    </location>
    <ligand>
        <name>Mg(2+)</name>
        <dbReference type="ChEBI" id="CHEBI:18420"/>
        <label>1</label>
    </ligand>
</feature>
<feature type="binding site" evidence="2">
    <location>
        <position position="142"/>
    </location>
    <ligand>
        <name>Mg(2+)</name>
        <dbReference type="ChEBI" id="CHEBI:18420"/>
        <label>2</label>
    </ligand>
</feature>
<feature type="binding site" evidence="1">
    <location>
        <position position="147"/>
    </location>
    <ligand>
        <name>dimethylallyl diphosphate</name>
        <dbReference type="ChEBI" id="CHEBI:57623"/>
    </ligand>
</feature>
<feature type="binding site" evidence="2">
    <location>
        <position position="148"/>
    </location>
    <ligand>
        <name>isopentenyl diphosphate</name>
        <dbReference type="ChEBI" id="CHEBI:128769"/>
    </ligand>
</feature>